<name>MNHA1_STAS1</name>
<dbReference type="EMBL" id="AP008934">
    <property type="protein sequence ID" value="BAE18968.1"/>
    <property type="molecule type" value="Genomic_DNA"/>
</dbReference>
<dbReference type="RefSeq" id="WP_011303514.1">
    <property type="nucleotide sequence ID" value="NZ_MTGA01000039.1"/>
</dbReference>
<dbReference type="SMR" id="Q49W91"/>
<dbReference type="GeneID" id="3616478"/>
<dbReference type="KEGG" id="ssp:SSP1823"/>
<dbReference type="PATRIC" id="fig|342451.11.peg.1819"/>
<dbReference type="eggNOG" id="COG1009">
    <property type="taxonomic scope" value="Bacteria"/>
</dbReference>
<dbReference type="eggNOG" id="COG2111">
    <property type="taxonomic scope" value="Bacteria"/>
</dbReference>
<dbReference type="HOGENOM" id="CLU_007100_2_1_9"/>
<dbReference type="OrthoDB" id="9807568at2"/>
<dbReference type="Proteomes" id="UP000006371">
    <property type="component" value="Chromosome"/>
</dbReference>
<dbReference type="GO" id="GO:0005886">
    <property type="term" value="C:plasma membrane"/>
    <property type="evidence" value="ECO:0007669"/>
    <property type="project" value="UniProtKB-SubCell"/>
</dbReference>
<dbReference type="GO" id="GO:0015297">
    <property type="term" value="F:antiporter activity"/>
    <property type="evidence" value="ECO:0007669"/>
    <property type="project" value="UniProtKB-KW"/>
</dbReference>
<dbReference type="GO" id="GO:1902600">
    <property type="term" value="P:proton transmembrane transport"/>
    <property type="evidence" value="ECO:0007669"/>
    <property type="project" value="UniProtKB-KW"/>
</dbReference>
<dbReference type="GO" id="GO:0006814">
    <property type="term" value="P:sodium ion transport"/>
    <property type="evidence" value="ECO:0007669"/>
    <property type="project" value="UniProtKB-KW"/>
</dbReference>
<dbReference type="InterPro" id="IPR050616">
    <property type="entry name" value="CPA3_Na-H_Antiporter_A"/>
</dbReference>
<dbReference type="InterPro" id="IPR005663">
    <property type="entry name" value="MrpA/MnhA1/PhaAB"/>
</dbReference>
<dbReference type="InterPro" id="IPR025383">
    <property type="entry name" value="MrpA_C/MbhD"/>
</dbReference>
<dbReference type="InterPro" id="IPR046806">
    <property type="entry name" value="MrpA_C/MbhE"/>
</dbReference>
<dbReference type="InterPro" id="IPR001750">
    <property type="entry name" value="ND/Mrp_TM"/>
</dbReference>
<dbReference type="InterPro" id="IPR001516">
    <property type="entry name" value="Proton_antipo_N"/>
</dbReference>
<dbReference type="NCBIfam" id="TIGR00940">
    <property type="entry name" value="2a6301s01"/>
    <property type="match status" value="1"/>
</dbReference>
<dbReference type="NCBIfam" id="NF009285">
    <property type="entry name" value="PRK12645.1"/>
    <property type="match status" value="1"/>
</dbReference>
<dbReference type="PANTHER" id="PTHR43373">
    <property type="entry name" value="NA(+)/H(+) ANTIPORTER SUBUNIT"/>
    <property type="match status" value="1"/>
</dbReference>
<dbReference type="PANTHER" id="PTHR43373:SF1">
    <property type="entry name" value="NA(+)_H(+) ANTIPORTER SUBUNIT A"/>
    <property type="match status" value="1"/>
</dbReference>
<dbReference type="Pfam" id="PF13244">
    <property type="entry name" value="MbhD"/>
    <property type="match status" value="1"/>
</dbReference>
<dbReference type="Pfam" id="PF20501">
    <property type="entry name" value="MbhE"/>
    <property type="match status" value="1"/>
</dbReference>
<dbReference type="Pfam" id="PF00361">
    <property type="entry name" value="Proton_antipo_M"/>
    <property type="match status" value="1"/>
</dbReference>
<dbReference type="Pfam" id="PF00662">
    <property type="entry name" value="Proton_antipo_N"/>
    <property type="match status" value="1"/>
</dbReference>
<dbReference type="PRINTS" id="PR01434">
    <property type="entry name" value="NADHDHGNASE5"/>
</dbReference>
<dbReference type="PRINTS" id="PR01435">
    <property type="entry name" value="NPOXDRDTASE5"/>
</dbReference>
<keyword id="KW-0050">Antiport</keyword>
<keyword id="KW-1003">Cell membrane</keyword>
<keyword id="KW-0375">Hydrogen ion transport</keyword>
<keyword id="KW-0406">Ion transport</keyword>
<keyword id="KW-0472">Membrane</keyword>
<keyword id="KW-1185">Reference proteome</keyword>
<keyword id="KW-0915">Sodium</keyword>
<keyword id="KW-0739">Sodium transport</keyword>
<keyword id="KW-0812">Transmembrane</keyword>
<keyword id="KW-1133">Transmembrane helix</keyword>
<keyword id="KW-0813">Transport</keyword>
<evidence type="ECO:0000250" key="1"/>
<evidence type="ECO:0000255" key="2"/>
<evidence type="ECO:0000305" key="3"/>
<protein>
    <recommendedName>
        <fullName>Na(+)/H(+) antiporter subunit A1</fullName>
    </recommendedName>
    <alternativeName>
        <fullName>Mnh complex subunit A1</fullName>
    </alternativeName>
</protein>
<reference key="1">
    <citation type="journal article" date="2005" name="Proc. Natl. Acad. Sci. U.S.A.">
        <title>Whole genome sequence of Staphylococcus saprophyticus reveals the pathogenesis of uncomplicated urinary tract infection.</title>
        <authorList>
            <person name="Kuroda M."/>
            <person name="Yamashita A."/>
            <person name="Hirakawa H."/>
            <person name="Kumano M."/>
            <person name="Morikawa K."/>
            <person name="Higashide M."/>
            <person name="Maruyama A."/>
            <person name="Inose Y."/>
            <person name="Matoba K."/>
            <person name="Toh H."/>
            <person name="Kuhara S."/>
            <person name="Hattori M."/>
            <person name="Ohta T."/>
        </authorList>
    </citation>
    <scope>NUCLEOTIDE SEQUENCE [LARGE SCALE GENOMIC DNA]</scope>
    <source>
        <strain>ATCC 15305 / DSM 20229 / NCIMB 8711 / NCTC 7292 / S-41</strain>
    </source>
</reference>
<organism>
    <name type="scientific">Staphylococcus saprophyticus subsp. saprophyticus (strain ATCC 15305 / DSM 20229 / NCIMB 8711 / NCTC 7292 / S-41)</name>
    <dbReference type="NCBI Taxonomy" id="342451"/>
    <lineage>
        <taxon>Bacteria</taxon>
        <taxon>Bacillati</taxon>
        <taxon>Bacillota</taxon>
        <taxon>Bacilli</taxon>
        <taxon>Bacillales</taxon>
        <taxon>Staphylococcaceae</taxon>
        <taxon>Staphylococcus</taxon>
    </lineage>
</organism>
<accession>Q49W91</accession>
<gene>
    <name type="primary">mnhA1</name>
    <name type="ordered locus">SSP1823</name>
</gene>
<proteinExistence type="inferred from homology"/>
<feature type="chain" id="PRO_0000372104" description="Na(+)/H(+) antiporter subunit A1">
    <location>
        <begin position="1"/>
        <end position="805"/>
    </location>
</feature>
<feature type="transmembrane region" description="Helical" evidence="2">
    <location>
        <begin position="1"/>
        <end position="21"/>
    </location>
</feature>
<feature type="transmembrane region" description="Helical" evidence="2">
    <location>
        <begin position="30"/>
        <end position="50"/>
    </location>
</feature>
<feature type="transmembrane region" description="Helical" evidence="2">
    <location>
        <begin position="79"/>
        <end position="99"/>
    </location>
</feature>
<feature type="transmembrane region" description="Helical" evidence="2">
    <location>
        <begin position="117"/>
        <end position="137"/>
    </location>
</feature>
<feature type="transmembrane region" description="Helical" evidence="2">
    <location>
        <begin position="166"/>
        <end position="186"/>
    </location>
</feature>
<feature type="transmembrane region" description="Helical" evidence="2">
    <location>
        <begin position="201"/>
        <end position="221"/>
    </location>
</feature>
<feature type="transmembrane region" description="Helical" evidence="2">
    <location>
        <begin position="226"/>
        <end position="246"/>
    </location>
</feature>
<feature type="transmembrane region" description="Helical" evidence="2">
    <location>
        <begin position="265"/>
        <end position="285"/>
    </location>
</feature>
<feature type="transmembrane region" description="Helical" evidence="2">
    <location>
        <begin position="300"/>
        <end position="320"/>
    </location>
</feature>
<feature type="transmembrane region" description="Helical" evidence="2">
    <location>
        <begin position="337"/>
        <end position="357"/>
    </location>
</feature>
<feature type="transmembrane region" description="Helical" evidence="2">
    <location>
        <begin position="377"/>
        <end position="397"/>
    </location>
</feature>
<feature type="transmembrane region" description="Helical" evidence="2">
    <location>
        <begin position="427"/>
        <end position="447"/>
    </location>
</feature>
<feature type="transmembrane region" description="Helical" evidence="2">
    <location>
        <begin position="480"/>
        <end position="500"/>
    </location>
</feature>
<feature type="transmembrane region" description="Helical" evidence="2">
    <location>
        <begin position="531"/>
        <end position="551"/>
    </location>
</feature>
<feature type="transmembrane region" description="Helical" evidence="2">
    <location>
        <begin position="591"/>
        <end position="611"/>
    </location>
</feature>
<feature type="transmembrane region" description="Helical" evidence="2">
    <location>
        <begin position="623"/>
        <end position="643"/>
    </location>
</feature>
<feature type="transmembrane region" description="Helical" evidence="2">
    <location>
        <begin position="646"/>
        <end position="666"/>
    </location>
</feature>
<feature type="transmembrane region" description="Helical" evidence="2">
    <location>
        <begin position="671"/>
        <end position="691"/>
    </location>
</feature>
<feature type="transmembrane region" description="Helical" evidence="2">
    <location>
        <begin position="707"/>
        <end position="727"/>
    </location>
</feature>
<feature type="transmembrane region" description="Helical" evidence="2">
    <location>
        <begin position="766"/>
        <end position="786"/>
    </location>
</feature>
<comment type="function">
    <text evidence="1">Mnh complex is a Na(+)/H(+) antiporter involved in Na(+) excretion.</text>
</comment>
<comment type="subunit">
    <text evidence="1">May form a heterooligomeric complex that consists of seven subunits: mnhA1, mnhB1, mnhC1, mnhD1, mnhE1, mnhF1 and mnhG1.</text>
</comment>
<comment type="subcellular location">
    <subcellularLocation>
        <location evidence="3">Cell membrane</location>
        <topology evidence="3">Multi-pass membrane protein</topology>
    </subcellularLocation>
</comment>
<comment type="similarity">
    <text evidence="3">Belongs to the CPA3 antiporters (TC 2.A.63) subunit A family.</text>
</comment>
<sequence>MSLLHIAVLLPLIFALIIPFVYRFYKRIHLGWFVLPIPVVLFIYFLSYISTTMSGNTIMEKANWMPHFGMNFNLYVDGLGLLFSLLITGIGCLIVLYSISYLSRQEQLGHFYCYLLLFMGAMLGLVLSDNLIILYLFWELTSFSSFLLISFWRDKQASIYGAQKSMLVTVFGGLSLLGGIILLSIAGGTTSIQELINNASEIQTSPFFIFSMILVLIGAMTKSAQFPFYVWLPDAMEAPTPVSAYLHSATMVKAGLYLVARMTPIFAVSQGWIWTVTAVGLITLFWASLNATKQQDLKGILAFSTVSQLGMIMAMLGVGAVSFHFEGAESQIYIAAFTAAIFHLINHATFKGALFMITGAVDHSTGTRDVKKLGGLLTIMPISFTITLITSLSMAGIPPFNGFLSKEKFLESMIEVTNVNLFSLDTLGILIPITAIIGSVFTFVYSIRFIGQIFLGSYKEDKLPKKAHEVSPLMLISPSILAILVIVFGLFPAILSGSIIEPAVNAIGQTTNSTAEFHMFHGFTPAFFSTLGIYIVGIVLIITFSYWIYLLQKQPTKLTINYWYNKFGDVTPRYSSKFTDTYVTGFTRNNLVIIFASLIVIALVTLLVTPFNIDFKDVSAIRPFELIIVVLIITAASMIIFAKSRLFSIIMASAVGYSVAIFFIFFGAPDLALTQFVVESISTALFLLCFYHLPNLNRHKETRSFKLVNIVISVGAGIVVTVLGLIAYGNRHFGSIAEFYKTHVYDLAHGTNMVNVILVDFRGTDTLFESSVLGIAGLGVYTMIKLRAKNDKSDEGGKNVEQTEE</sequence>